<name>Y4456_PSESM</name>
<gene>
    <name type="ordered locus">PSPTO_4456</name>
</gene>
<reference key="1">
    <citation type="journal article" date="2003" name="Proc. Natl. Acad. Sci. U.S.A.">
        <title>The complete genome sequence of the Arabidopsis and tomato pathogen Pseudomonas syringae pv. tomato DC3000.</title>
        <authorList>
            <person name="Buell C.R."/>
            <person name="Joardar V."/>
            <person name="Lindeberg M."/>
            <person name="Selengut J."/>
            <person name="Paulsen I.T."/>
            <person name="Gwinn M.L."/>
            <person name="Dodson R.J."/>
            <person name="DeBoy R.T."/>
            <person name="Durkin A.S."/>
            <person name="Kolonay J.F."/>
            <person name="Madupu R."/>
            <person name="Daugherty S.C."/>
            <person name="Brinkac L.M."/>
            <person name="Beanan M.J."/>
            <person name="Haft D.H."/>
            <person name="Nelson W.C."/>
            <person name="Davidsen T.M."/>
            <person name="Zafar N."/>
            <person name="Zhou L."/>
            <person name="Liu J."/>
            <person name="Yuan Q."/>
            <person name="Khouri H.M."/>
            <person name="Fedorova N.B."/>
            <person name="Tran B."/>
            <person name="Russell D."/>
            <person name="Berry K.J."/>
            <person name="Utterback T.R."/>
            <person name="Van Aken S.E."/>
            <person name="Feldblyum T.V."/>
            <person name="D'Ascenzo M."/>
            <person name="Deng W.-L."/>
            <person name="Ramos A.R."/>
            <person name="Alfano J.R."/>
            <person name="Cartinhour S."/>
            <person name="Chatterjee A.K."/>
            <person name="Delaney T.P."/>
            <person name="Lazarowitz S.G."/>
            <person name="Martin G.B."/>
            <person name="Schneider D.J."/>
            <person name="Tang X."/>
            <person name="Bender C.L."/>
            <person name="White O."/>
            <person name="Fraser C.M."/>
            <person name="Collmer A."/>
        </authorList>
    </citation>
    <scope>NUCLEOTIDE SEQUENCE [LARGE SCALE GENOMIC DNA]</scope>
    <source>
        <strain>ATCC BAA-871 / DC3000</strain>
    </source>
</reference>
<sequence length="285" mass="32215">MRMIIVSGRSGSGKSTALDVLEDNGFYCVDNLPAGLLPELAERALINTELAEPLLAVSIDARNLPSHLTRFPQMLDEVRSRNIQCDVLYLDADEATLLKRFSETRRRHPLSTADRSLAEAIRDETTLLGPIIDLADLKINTTHLNLYQLRDALKLRLLNKPEPGTAFLIESFGFKRGMPVDADLVFDVRCLPNPYWKPELRDHSGLEQPVIDYLSAQADVEEMFQDIFSYLNKWLPRFAASNRSYVTIAIGCTGGHHRSVYLTERLGQVLQQSLKNVQVRHRDLS</sequence>
<organism>
    <name type="scientific">Pseudomonas syringae pv. tomato (strain ATCC BAA-871 / DC3000)</name>
    <dbReference type="NCBI Taxonomy" id="223283"/>
    <lineage>
        <taxon>Bacteria</taxon>
        <taxon>Pseudomonadati</taxon>
        <taxon>Pseudomonadota</taxon>
        <taxon>Gammaproteobacteria</taxon>
        <taxon>Pseudomonadales</taxon>
        <taxon>Pseudomonadaceae</taxon>
        <taxon>Pseudomonas</taxon>
    </lineage>
</organism>
<proteinExistence type="inferred from homology"/>
<accession>Q87WT7</accession>
<feature type="chain" id="PRO_0000107747" description="Nucleotide-binding protein PSPTO_4456">
    <location>
        <begin position="1"/>
        <end position="285"/>
    </location>
</feature>
<feature type="binding site" evidence="1">
    <location>
        <begin position="8"/>
        <end position="15"/>
    </location>
    <ligand>
        <name>ATP</name>
        <dbReference type="ChEBI" id="CHEBI:30616"/>
    </ligand>
</feature>
<feature type="binding site" evidence="1">
    <location>
        <begin position="60"/>
        <end position="63"/>
    </location>
    <ligand>
        <name>GTP</name>
        <dbReference type="ChEBI" id="CHEBI:37565"/>
    </ligand>
</feature>
<evidence type="ECO:0000255" key="1">
    <source>
        <dbReference type="HAMAP-Rule" id="MF_00636"/>
    </source>
</evidence>
<keyword id="KW-0067">ATP-binding</keyword>
<keyword id="KW-0342">GTP-binding</keyword>
<keyword id="KW-0547">Nucleotide-binding</keyword>
<keyword id="KW-1185">Reference proteome</keyword>
<dbReference type="EMBL" id="AE016853">
    <property type="protein sequence ID" value="AAO57905.1"/>
    <property type="molecule type" value="Genomic_DNA"/>
</dbReference>
<dbReference type="RefSeq" id="NP_794210.1">
    <property type="nucleotide sequence ID" value="NC_004578.1"/>
</dbReference>
<dbReference type="SMR" id="Q87WT7"/>
<dbReference type="STRING" id="223283.PSPTO_4456"/>
<dbReference type="KEGG" id="pst:PSPTO_4456"/>
<dbReference type="PATRIC" id="fig|223283.9.peg.4571"/>
<dbReference type="eggNOG" id="COG1660">
    <property type="taxonomic scope" value="Bacteria"/>
</dbReference>
<dbReference type="HOGENOM" id="CLU_059558_1_1_6"/>
<dbReference type="OrthoDB" id="9784461at2"/>
<dbReference type="PhylomeDB" id="Q87WT7"/>
<dbReference type="Proteomes" id="UP000002515">
    <property type="component" value="Chromosome"/>
</dbReference>
<dbReference type="GO" id="GO:0005524">
    <property type="term" value="F:ATP binding"/>
    <property type="evidence" value="ECO:0007669"/>
    <property type="project" value="UniProtKB-UniRule"/>
</dbReference>
<dbReference type="GO" id="GO:0005525">
    <property type="term" value="F:GTP binding"/>
    <property type="evidence" value="ECO:0007669"/>
    <property type="project" value="UniProtKB-UniRule"/>
</dbReference>
<dbReference type="HAMAP" id="MF_00636">
    <property type="entry name" value="RapZ_like"/>
    <property type="match status" value="1"/>
</dbReference>
<dbReference type="InterPro" id="IPR027417">
    <property type="entry name" value="P-loop_NTPase"/>
</dbReference>
<dbReference type="InterPro" id="IPR005337">
    <property type="entry name" value="RapZ-like"/>
</dbReference>
<dbReference type="InterPro" id="IPR053930">
    <property type="entry name" value="RapZ-like_N"/>
</dbReference>
<dbReference type="InterPro" id="IPR053931">
    <property type="entry name" value="RapZ_C"/>
</dbReference>
<dbReference type="NCBIfam" id="NF003828">
    <property type="entry name" value="PRK05416.1"/>
    <property type="match status" value="1"/>
</dbReference>
<dbReference type="PANTHER" id="PTHR30448">
    <property type="entry name" value="RNASE ADAPTER PROTEIN RAPZ"/>
    <property type="match status" value="1"/>
</dbReference>
<dbReference type="PANTHER" id="PTHR30448:SF0">
    <property type="entry name" value="RNASE ADAPTER PROTEIN RAPZ"/>
    <property type="match status" value="1"/>
</dbReference>
<dbReference type="Pfam" id="PF22740">
    <property type="entry name" value="PapZ_C"/>
    <property type="match status" value="1"/>
</dbReference>
<dbReference type="Pfam" id="PF03668">
    <property type="entry name" value="RapZ-like_N"/>
    <property type="match status" value="1"/>
</dbReference>
<dbReference type="PIRSF" id="PIRSF005052">
    <property type="entry name" value="P-loopkin"/>
    <property type="match status" value="1"/>
</dbReference>
<dbReference type="SUPFAM" id="SSF52540">
    <property type="entry name" value="P-loop containing nucleoside triphosphate hydrolases"/>
    <property type="match status" value="1"/>
</dbReference>
<protein>
    <recommendedName>
        <fullName evidence="1">Nucleotide-binding protein PSPTO_4456</fullName>
    </recommendedName>
</protein>
<comment type="function">
    <text evidence="1">Displays ATPase and GTPase activities.</text>
</comment>
<comment type="similarity">
    <text evidence="1">Belongs to the RapZ-like family.</text>
</comment>